<gene>
    <name evidence="1" type="primary">psbN</name>
</gene>
<accession>Q7GZ99</accession>
<sequence length="43" mass="4722">METATLVAIFISGLLVSFTGYALYTAFGQPSQQLRDPFEEHGD</sequence>
<name>PSBN_BASHY</name>
<comment type="function">
    <text evidence="1">May play a role in photosystem I and II biogenesis.</text>
</comment>
<comment type="subcellular location">
    <subcellularLocation>
        <location evidence="1">Plastid</location>
        <location evidence="1">Chloroplast thylakoid membrane</location>
        <topology evidence="1">Single-pass membrane protein</topology>
    </subcellularLocation>
</comment>
<comment type="similarity">
    <text evidence="1">Belongs to the PsbN family.</text>
</comment>
<comment type="caution">
    <text evidence="1">Originally thought to be a component of PSII; based on experiments in Synechocystis, N.tabacum and barley, and its absence from PSII in T.elongatus and T.vulcanus, this is probably not true.</text>
</comment>
<dbReference type="EMBL" id="AY181944">
    <property type="protein sequence ID" value="AAO66191.1"/>
    <property type="molecule type" value="Genomic_DNA"/>
</dbReference>
<dbReference type="SMR" id="Q7GZ99"/>
<dbReference type="GO" id="GO:0009535">
    <property type="term" value="C:chloroplast thylakoid membrane"/>
    <property type="evidence" value="ECO:0007669"/>
    <property type="project" value="UniProtKB-SubCell"/>
</dbReference>
<dbReference type="GO" id="GO:0015979">
    <property type="term" value="P:photosynthesis"/>
    <property type="evidence" value="ECO:0007669"/>
    <property type="project" value="InterPro"/>
</dbReference>
<dbReference type="HAMAP" id="MF_00293">
    <property type="entry name" value="PSII_PsbN"/>
    <property type="match status" value="1"/>
</dbReference>
<dbReference type="InterPro" id="IPR003398">
    <property type="entry name" value="PSII_PsbN"/>
</dbReference>
<dbReference type="PANTHER" id="PTHR35326">
    <property type="entry name" value="PROTEIN PSBN"/>
    <property type="match status" value="1"/>
</dbReference>
<dbReference type="PANTHER" id="PTHR35326:SF3">
    <property type="entry name" value="PROTEIN PSBN"/>
    <property type="match status" value="1"/>
</dbReference>
<dbReference type="Pfam" id="PF02468">
    <property type="entry name" value="PsbN"/>
    <property type="match status" value="1"/>
</dbReference>
<keyword id="KW-0150">Chloroplast</keyword>
<keyword id="KW-0472">Membrane</keyword>
<keyword id="KW-0934">Plastid</keyword>
<keyword id="KW-0793">Thylakoid</keyword>
<keyword id="KW-0812">Transmembrane</keyword>
<keyword id="KW-1133">Transmembrane helix</keyword>
<organism>
    <name type="scientific">Bassia hyssopifolia</name>
    <name type="common">Fivehorn smotherweed</name>
    <name type="synonym">Salsola hyssopifolia</name>
    <dbReference type="NCBI Taxonomy" id="224140"/>
    <lineage>
        <taxon>Eukaryota</taxon>
        <taxon>Viridiplantae</taxon>
        <taxon>Streptophyta</taxon>
        <taxon>Embryophyta</taxon>
        <taxon>Tracheophyta</taxon>
        <taxon>Spermatophyta</taxon>
        <taxon>Magnoliopsida</taxon>
        <taxon>eudicotyledons</taxon>
        <taxon>Gunneridae</taxon>
        <taxon>Pentapetalae</taxon>
        <taxon>Caryophyllales</taxon>
        <taxon>Chenopodiaceae</taxon>
        <taxon>Camphorosmoideae</taxon>
        <taxon>Camphorosmeae</taxon>
        <taxon>Bassia</taxon>
    </lineage>
</organism>
<proteinExistence type="inferred from homology"/>
<geneLocation type="chloroplast"/>
<evidence type="ECO:0000255" key="1">
    <source>
        <dbReference type="HAMAP-Rule" id="MF_00293"/>
    </source>
</evidence>
<reference key="1">
    <citation type="journal article" date="2003" name="Plant Syst. Evol.">
        <title>An integrated molecular and morphological study of the subfamily Suaedoideae Ulbr. (Chenopodiaceae).</title>
        <authorList>
            <person name="Schuetze P."/>
            <person name="Freitag H."/>
            <person name="Weising K."/>
        </authorList>
    </citation>
    <scope>NUCLEOTIDE SEQUENCE [GENOMIC DNA]</scope>
</reference>
<feature type="chain" id="PRO_0000207871" description="Protein PsbN">
    <location>
        <begin position="1"/>
        <end position="43"/>
    </location>
</feature>
<feature type="transmembrane region" description="Helical" evidence="1">
    <location>
        <begin position="7"/>
        <end position="27"/>
    </location>
</feature>
<protein>
    <recommendedName>
        <fullName evidence="1">Protein PsbN</fullName>
    </recommendedName>
</protein>